<gene>
    <name evidence="7" type="primary">MAPKKK20</name>
    <name evidence="8" type="synonym">AIK1</name>
    <name evidence="7" type="synonym">MKKK20</name>
    <name evidence="9" type="ordered locus">At3g50310</name>
    <name evidence="10" type="ORF">F11C1.150</name>
</gene>
<name>M3K20_ARATH</name>
<feature type="chain" id="PRO_0000449278" description="Mitogen-activated protein kinase kinase kinase 20">
    <location>
        <begin position="1"/>
        <end position="342"/>
    </location>
</feature>
<feature type="domain" description="Protein kinase" evidence="1">
    <location>
        <begin position="3"/>
        <end position="268"/>
    </location>
</feature>
<feature type="region of interest" description="Required for MKK3 binding" evidence="6">
    <location>
        <begin position="285"/>
        <end position="342"/>
    </location>
</feature>
<feature type="active site" description="Proton acceptor" evidence="1 2">
    <location>
        <position position="131"/>
    </location>
</feature>
<feature type="binding site" evidence="1">
    <location>
        <begin position="9"/>
        <end position="17"/>
    </location>
    <ligand>
        <name>ATP</name>
        <dbReference type="ChEBI" id="CHEBI:30616"/>
    </ligand>
</feature>
<feature type="binding site" evidence="1">
    <location>
        <position position="36"/>
    </location>
    <ligand>
        <name>ATP</name>
        <dbReference type="ChEBI" id="CHEBI:30616"/>
    </ligand>
</feature>
<feature type="modified residue" description="Phosphoserine" evidence="5">
    <location>
        <position position="18"/>
    </location>
</feature>
<feature type="modified residue" description="Phosphothreonine" evidence="5">
    <location>
        <position position="19"/>
    </location>
</feature>
<feature type="modified residue" description="Phosphotyrosine" evidence="5">
    <location>
        <position position="41"/>
    </location>
</feature>
<feature type="modified residue" description="Phosphotyrosine" evidence="5">
    <location>
        <position position="66"/>
    </location>
</feature>
<feature type="modified residue" description="Phosphoserine" evidence="5">
    <location>
        <position position="93"/>
    </location>
</feature>
<feature type="modified residue" description="Phosphoserine" evidence="5">
    <location>
        <position position="114"/>
    </location>
</feature>
<feature type="mutagenesis site" description="Loss of kinase activity." evidence="4">
    <original>K</original>
    <variation>M</variation>
    <location>
        <position position="36"/>
    </location>
</feature>
<proteinExistence type="evidence at protein level"/>
<dbReference type="EC" id="2.7.11.25" evidence="1 4 5"/>
<dbReference type="EMBL" id="AL132976">
    <property type="protein sequence ID" value="CAB62310.1"/>
    <property type="molecule type" value="Genomic_DNA"/>
</dbReference>
<dbReference type="EMBL" id="CP002686">
    <property type="protein sequence ID" value="AEE78651.1"/>
    <property type="molecule type" value="Genomic_DNA"/>
</dbReference>
<dbReference type="PIR" id="T45577">
    <property type="entry name" value="T45577"/>
</dbReference>
<dbReference type="RefSeq" id="NP_190600.1">
    <property type="nucleotide sequence ID" value="NM_114891.2"/>
</dbReference>
<dbReference type="SMR" id="Q9SND6"/>
<dbReference type="FunCoup" id="Q9SND6">
    <property type="interactions" value="371"/>
</dbReference>
<dbReference type="IntAct" id="Q9SND6">
    <property type="interactions" value="7"/>
</dbReference>
<dbReference type="STRING" id="3702.Q9SND6"/>
<dbReference type="iPTMnet" id="Q9SND6"/>
<dbReference type="PaxDb" id="3702-AT3G50310.1"/>
<dbReference type="EnsemblPlants" id="AT3G50310.1">
    <property type="protein sequence ID" value="AT3G50310.1"/>
    <property type="gene ID" value="AT3G50310"/>
</dbReference>
<dbReference type="GeneID" id="824193"/>
<dbReference type="Gramene" id="AT3G50310.1">
    <property type="protein sequence ID" value="AT3G50310.1"/>
    <property type="gene ID" value="AT3G50310"/>
</dbReference>
<dbReference type="KEGG" id="ath:AT3G50310"/>
<dbReference type="Araport" id="AT3G50310"/>
<dbReference type="TAIR" id="AT3G50310">
    <property type="gene designation" value="MAPKKK20"/>
</dbReference>
<dbReference type="eggNOG" id="KOG0198">
    <property type="taxonomic scope" value="Eukaryota"/>
</dbReference>
<dbReference type="HOGENOM" id="CLU_000288_63_23_1"/>
<dbReference type="InParanoid" id="Q9SND6"/>
<dbReference type="OMA" id="RIHSKGF"/>
<dbReference type="PhylomeDB" id="Q9SND6"/>
<dbReference type="BRENDA" id="2.7.11.25">
    <property type="organism ID" value="399"/>
</dbReference>
<dbReference type="PRO" id="PR:Q9SND6"/>
<dbReference type="Proteomes" id="UP000006548">
    <property type="component" value="Chromosome 3"/>
</dbReference>
<dbReference type="ExpressionAtlas" id="Q9SND6">
    <property type="expression patterns" value="baseline and differential"/>
</dbReference>
<dbReference type="GO" id="GO:0005737">
    <property type="term" value="C:cytoplasm"/>
    <property type="evidence" value="ECO:0000314"/>
    <property type="project" value="UniProtKB"/>
</dbReference>
<dbReference type="GO" id="GO:0005634">
    <property type="term" value="C:nucleus"/>
    <property type="evidence" value="ECO:0000314"/>
    <property type="project" value="TAIR"/>
</dbReference>
<dbReference type="GO" id="GO:0005524">
    <property type="term" value="F:ATP binding"/>
    <property type="evidence" value="ECO:0007669"/>
    <property type="project" value="UniProtKB-KW"/>
</dbReference>
<dbReference type="GO" id="GO:0004708">
    <property type="term" value="F:MAP kinase kinase activity"/>
    <property type="evidence" value="ECO:0000314"/>
    <property type="project" value="TAIR"/>
</dbReference>
<dbReference type="GO" id="GO:0004709">
    <property type="term" value="F:MAP kinase kinase kinase activity"/>
    <property type="evidence" value="ECO:0007669"/>
    <property type="project" value="UniProtKB-EC"/>
</dbReference>
<dbReference type="GO" id="GO:0004672">
    <property type="term" value="F:protein kinase activity"/>
    <property type="evidence" value="ECO:0000314"/>
    <property type="project" value="TAIR"/>
</dbReference>
<dbReference type="GO" id="GO:0019901">
    <property type="term" value="F:protein kinase binding"/>
    <property type="evidence" value="ECO:0000353"/>
    <property type="project" value="TAIR"/>
</dbReference>
<dbReference type="GO" id="GO:0106310">
    <property type="term" value="F:protein serine kinase activity"/>
    <property type="evidence" value="ECO:0007669"/>
    <property type="project" value="RHEA"/>
</dbReference>
<dbReference type="GO" id="GO:0009738">
    <property type="term" value="P:abscisic acid-activated signaling pathway"/>
    <property type="evidence" value="ECO:0000315"/>
    <property type="project" value="UniProtKB"/>
</dbReference>
<dbReference type="GO" id="GO:0051301">
    <property type="term" value="P:cell division"/>
    <property type="evidence" value="ECO:0000315"/>
    <property type="project" value="UniProtKB"/>
</dbReference>
<dbReference type="GO" id="GO:0048235">
    <property type="term" value="P:pollen sperm cell differentiation"/>
    <property type="evidence" value="ECO:0000270"/>
    <property type="project" value="TAIR"/>
</dbReference>
<dbReference type="GO" id="GO:0046777">
    <property type="term" value="P:protein autophosphorylation"/>
    <property type="evidence" value="ECO:0000314"/>
    <property type="project" value="TAIR"/>
</dbReference>
<dbReference type="GO" id="GO:0006468">
    <property type="term" value="P:protein phosphorylation"/>
    <property type="evidence" value="ECO:0000314"/>
    <property type="project" value="TAIR"/>
</dbReference>
<dbReference type="GO" id="GO:0010082">
    <property type="term" value="P:regulation of root meristem growth"/>
    <property type="evidence" value="ECO:0000315"/>
    <property type="project" value="TAIR"/>
</dbReference>
<dbReference type="GO" id="GO:0090333">
    <property type="term" value="P:regulation of stomatal closure"/>
    <property type="evidence" value="ECO:0000315"/>
    <property type="project" value="TAIR"/>
</dbReference>
<dbReference type="GO" id="GO:0051510">
    <property type="term" value="P:regulation of unidimensional cell growth"/>
    <property type="evidence" value="ECO:0000315"/>
    <property type="project" value="UniProtKB"/>
</dbReference>
<dbReference type="GO" id="GO:0009737">
    <property type="term" value="P:response to abscisic acid"/>
    <property type="evidence" value="ECO:0000315"/>
    <property type="project" value="TAIR"/>
</dbReference>
<dbReference type="GO" id="GO:0009409">
    <property type="term" value="P:response to cold"/>
    <property type="evidence" value="ECO:0000270"/>
    <property type="project" value="TAIR"/>
</dbReference>
<dbReference type="GO" id="GO:0000302">
    <property type="term" value="P:response to reactive oxygen species"/>
    <property type="evidence" value="ECO:0000270"/>
    <property type="project" value="TAIR"/>
</dbReference>
<dbReference type="GO" id="GO:0009651">
    <property type="term" value="P:response to salt stress"/>
    <property type="evidence" value="ECO:0000315"/>
    <property type="project" value="TAIR"/>
</dbReference>
<dbReference type="GO" id="GO:0009414">
    <property type="term" value="P:response to water deprivation"/>
    <property type="evidence" value="ECO:0000315"/>
    <property type="project" value="TAIR"/>
</dbReference>
<dbReference type="CDD" id="cd06606">
    <property type="entry name" value="STKc_MAPKKK"/>
    <property type="match status" value="1"/>
</dbReference>
<dbReference type="FunFam" id="1.10.510.10:FF:000882">
    <property type="entry name" value="Mitogen-activated protein kinase kinase kinase 17"/>
    <property type="match status" value="1"/>
</dbReference>
<dbReference type="Gene3D" id="1.10.510.10">
    <property type="entry name" value="Transferase(Phosphotransferase) domain 1"/>
    <property type="match status" value="1"/>
</dbReference>
<dbReference type="InterPro" id="IPR011009">
    <property type="entry name" value="Kinase-like_dom_sf"/>
</dbReference>
<dbReference type="InterPro" id="IPR052751">
    <property type="entry name" value="Plant_MAPKKK"/>
</dbReference>
<dbReference type="InterPro" id="IPR000719">
    <property type="entry name" value="Prot_kinase_dom"/>
</dbReference>
<dbReference type="InterPro" id="IPR017441">
    <property type="entry name" value="Protein_kinase_ATP_BS"/>
</dbReference>
<dbReference type="InterPro" id="IPR008271">
    <property type="entry name" value="Ser/Thr_kinase_AS"/>
</dbReference>
<dbReference type="PANTHER" id="PTHR48011">
    <property type="entry name" value="CCR4-NOT TRANSCRIPTIONAL COMPLEX SUBUNIT CAF120-RELATED"/>
    <property type="match status" value="1"/>
</dbReference>
<dbReference type="PANTHER" id="PTHR48011:SF18">
    <property type="entry name" value="MITOGEN-ACTIVATED PROTEIN KINASE KINASE KINASE 19-RELATED"/>
    <property type="match status" value="1"/>
</dbReference>
<dbReference type="Pfam" id="PF00069">
    <property type="entry name" value="Pkinase"/>
    <property type="match status" value="1"/>
</dbReference>
<dbReference type="SMART" id="SM00220">
    <property type="entry name" value="S_TKc"/>
    <property type="match status" value="1"/>
</dbReference>
<dbReference type="SUPFAM" id="SSF56112">
    <property type="entry name" value="Protein kinase-like (PK-like)"/>
    <property type="match status" value="1"/>
</dbReference>
<dbReference type="PROSITE" id="PS00107">
    <property type="entry name" value="PROTEIN_KINASE_ATP"/>
    <property type="match status" value="1"/>
</dbReference>
<dbReference type="PROSITE" id="PS50011">
    <property type="entry name" value="PROTEIN_KINASE_DOM"/>
    <property type="match status" value="1"/>
</dbReference>
<dbReference type="PROSITE" id="PS00108">
    <property type="entry name" value="PROTEIN_KINASE_ST"/>
    <property type="match status" value="1"/>
</dbReference>
<accession>Q9SND6</accession>
<accession>A0A178VGW0</accession>
<protein>
    <recommendedName>
        <fullName evidence="7">Mitogen-activated protein kinase kinase kinase 20</fullName>
        <shortName evidence="7">MAPKK kinase 20</shortName>
        <ecNumber evidence="1 4 5">2.7.11.25</ecNumber>
    </recommendedName>
    <alternativeName>
        <fullName evidence="8">Protein ABA-INSENSITIVE PROTEIN KINASE 1</fullName>
    </alternativeName>
</protein>
<comment type="function">
    <text evidence="3 4 5">Mitogen-activated protein kinase kinase (MAPKK) that phosphorylates both MKK3 and MPK18 and regulate two separate signaling pathways involved in root microtubule functions (PubMed:28848569). MAPKK which regulates abscisic acid (ABA) responses in a MAPKKK20-MKK5-MPK6 cascade involved in root growth (e.g. root cell division and elongation) and stomatal response, probably via MKK5 activation by protein phosphorylation and subsequent activation of MAPK6 by MKK5 (PubMed:27913741). Involved in various abiotic stresses (e.g. osmotic stress, cold and hydrogen peroxide) responses by phosphorylating and thus regulating MPK6 activity, in an ABA-independent manner (PubMed:21969089).</text>
</comment>
<comment type="catalytic activity">
    <reaction evidence="1 4 5">
        <text>L-seryl-[protein] + ATP = O-phospho-L-seryl-[protein] + ADP + H(+)</text>
        <dbReference type="Rhea" id="RHEA:17989"/>
        <dbReference type="Rhea" id="RHEA-COMP:9863"/>
        <dbReference type="Rhea" id="RHEA-COMP:11604"/>
        <dbReference type="ChEBI" id="CHEBI:15378"/>
        <dbReference type="ChEBI" id="CHEBI:29999"/>
        <dbReference type="ChEBI" id="CHEBI:30616"/>
        <dbReference type="ChEBI" id="CHEBI:83421"/>
        <dbReference type="ChEBI" id="CHEBI:456216"/>
        <dbReference type="EC" id="2.7.11.25"/>
    </reaction>
</comment>
<comment type="catalytic activity">
    <reaction evidence="1 4 5">
        <text>L-threonyl-[protein] + ATP = O-phospho-L-threonyl-[protein] + ADP + H(+)</text>
        <dbReference type="Rhea" id="RHEA:46608"/>
        <dbReference type="Rhea" id="RHEA-COMP:11060"/>
        <dbReference type="Rhea" id="RHEA-COMP:11605"/>
        <dbReference type="ChEBI" id="CHEBI:15378"/>
        <dbReference type="ChEBI" id="CHEBI:30013"/>
        <dbReference type="ChEBI" id="CHEBI:30616"/>
        <dbReference type="ChEBI" id="CHEBI:61977"/>
        <dbReference type="ChEBI" id="CHEBI:456216"/>
        <dbReference type="EC" id="2.7.11.25"/>
    </reaction>
</comment>
<comment type="activity regulation">
    <text evidence="4 5">Activated through serine, threonine and tyrosine phosphorylation, especially upon abscisic acid (ABA) treatment (PubMed:27913741, PubMed:28848569). Restricted activity by ABI1-mediated dephosphorylation (PubMed:27913741).</text>
</comment>
<comment type="subunit">
    <text evidence="4 5 6">Interacts with MKK3 and MPK18 via its C-terminal domain (PubMed:28848569, PubMed:30081740). Binds to MKK5 (PubMed:27913741).</text>
</comment>
<comment type="interaction">
    <interactant intactId="EBI-1235872">
        <id>Q9SND6</id>
    </interactant>
    <interactant intactId="EBI-1235664">
        <id>P25854</id>
        <label>CAM4</label>
    </interactant>
    <organismsDiffer>false</organismsDiffer>
    <experiments>2</experiments>
</comment>
<comment type="interaction">
    <interactant intactId="EBI-1235872">
        <id>Q9SND6</id>
    </interactant>
    <interactant intactId="EBI-1236097">
        <id>Q03509</id>
        <label>CAM6</label>
    </interactant>
    <organismsDiffer>false</organismsDiffer>
    <experiments>2</experiments>
</comment>
<comment type="interaction">
    <interactant intactId="EBI-1235872">
        <id>Q9SND6</id>
    </interactant>
    <interactant intactId="EBI-1236048">
        <id>Q9S744</id>
        <label>CML9</label>
    </interactant>
    <organismsDiffer>false</organismsDiffer>
    <experiments>2</experiments>
</comment>
<comment type="subcellular location">
    <subcellularLocation>
        <location evidence="5">Nucleus</location>
    </subcellularLocation>
    <subcellularLocation>
        <location evidence="4 5 6">Cytoplasm</location>
    </subcellularLocation>
</comment>
<comment type="tissue specificity">
    <text evidence="3 4 5">Expressed in roots, seedlings, leaves, flower buds, flowers and siliques.</text>
</comment>
<comment type="developmental stage">
    <text evidence="3 4 5">During flower development, strongly expressed in pollen grains with a progressive increase from young buds to later stages of maturation (PubMed:28848569). To a lesser extent, present in the gynoecium, particularly in the style and carpel (PubMed:28848569). Also expressed in nectaries, petals, sepals and pollen tubes (PubMed:28848569). Accumulates progressively during seedlings development (PubMed:21969089). In mature plants, confined to floral clusters (PubMed:21969089). In roots, present in meristematic and elongation zones (PubMed:27913741).</text>
</comment>
<comment type="induction">
    <text evidence="3 4">Induced by salt (NaCl), mannitol, methyl viologen (MV), sorbitol and cold (PubMed:21969089). Triggered by abscisic acid (ABA) (PubMed:27913741).</text>
</comment>
<comment type="PTM">
    <text evidence="4 5">Autophosphorylates; active in phosphorylated state (PubMed:28848569). Dephosphorylated by ABI1 (PubMed:27913741).</text>
</comment>
<comment type="disruption phenotype">
    <text evidence="3 4 5">Short roots with abnormal twisting (e.g. leftward skewing) in media containing microtubule-disrupting drugs (e.g. oryzalin) (PubMed:28848569). Stronger sensitivity to high salt concentration and higher water loss rates under dehydration conditions (PubMed:21969089). Increased accumulation of superoxide under high salt condition (PubMed:21969089). All these phenotypes are associated with reduced MPK6 activity (PubMed:21969089). Insensitivity to abscisic acid (ABA) in terms of root growth inhibition (e.g. root cell division and elongation) and stomatal response leading to increased water loss under dehydrated conditions (PubMed:27913741). Impaired ABA-mediated increased activity of MPK6 (PubMed:27913741).</text>
</comment>
<comment type="similarity">
    <text evidence="1">Belongs to the protein kinase superfamily. Ser/Thr protein kinase family.</text>
</comment>
<sequence>MEWVRGETIGFGTFSTVSTATKSRNSGDFPALIAVKSTDAYGAASLSNEKSVLDSLGDCPEIIRCYGEDSTVENGEEMHNLLLEYASRGSLASYMKKLGGEGLPESTVRRHTGSVLRGLRHIHAKGFAHCDIKLANILLFNDGSVKIADFGLAMRVDGDLTALRKSVEIRGTPLYMAPECVNDNEYGSAADVWALGCAVVEMFSGKTAWSVKEGSHFMSLLIRIGVGDELPKIPEMLSEEGKDFLSKCFVKDPAKRWTAEMLLNHSFVTIDLEDDHRENFVVKVKDEDKVLMSPKCPFEFDDWDSFTLDSNPSFDSPVERLGSLVSGSIPDWSVGGSWLTVR</sequence>
<organism>
    <name type="scientific">Arabidopsis thaliana</name>
    <name type="common">Mouse-ear cress</name>
    <dbReference type="NCBI Taxonomy" id="3702"/>
    <lineage>
        <taxon>Eukaryota</taxon>
        <taxon>Viridiplantae</taxon>
        <taxon>Streptophyta</taxon>
        <taxon>Embryophyta</taxon>
        <taxon>Tracheophyta</taxon>
        <taxon>Spermatophyta</taxon>
        <taxon>Magnoliopsida</taxon>
        <taxon>eudicotyledons</taxon>
        <taxon>Gunneridae</taxon>
        <taxon>Pentapetalae</taxon>
        <taxon>rosids</taxon>
        <taxon>malvids</taxon>
        <taxon>Brassicales</taxon>
        <taxon>Brassicaceae</taxon>
        <taxon>Camelineae</taxon>
        <taxon>Arabidopsis</taxon>
    </lineage>
</organism>
<evidence type="ECO:0000255" key="1">
    <source>
        <dbReference type="PROSITE-ProRule" id="PRU00159"/>
    </source>
</evidence>
<evidence type="ECO:0000255" key="2">
    <source>
        <dbReference type="PROSITE-ProRule" id="PRU10027"/>
    </source>
</evidence>
<evidence type="ECO:0000269" key="3">
    <source>
    </source>
</evidence>
<evidence type="ECO:0000269" key="4">
    <source>
    </source>
</evidence>
<evidence type="ECO:0000269" key="5">
    <source>
    </source>
</evidence>
<evidence type="ECO:0000269" key="6">
    <source>
    </source>
</evidence>
<evidence type="ECO:0000303" key="7">
    <source>
    </source>
</evidence>
<evidence type="ECO:0000303" key="8">
    <source>
    </source>
</evidence>
<evidence type="ECO:0000312" key="9">
    <source>
        <dbReference type="Araport" id="AT3G50310"/>
    </source>
</evidence>
<evidence type="ECO:0000312" key="10">
    <source>
        <dbReference type="EMBL" id="CAB62310.1"/>
    </source>
</evidence>
<keyword id="KW-0938">Abscisic acid signaling pathway</keyword>
<keyword id="KW-0067">ATP-binding</keyword>
<keyword id="KW-0963">Cytoplasm</keyword>
<keyword id="KW-0418">Kinase</keyword>
<keyword id="KW-0547">Nucleotide-binding</keyword>
<keyword id="KW-0539">Nucleus</keyword>
<keyword id="KW-0597">Phosphoprotein</keyword>
<keyword id="KW-1185">Reference proteome</keyword>
<keyword id="KW-0723">Serine/threonine-protein kinase</keyword>
<keyword id="KW-0346">Stress response</keyword>
<keyword id="KW-0808">Transferase</keyword>
<reference key="1">
    <citation type="journal article" date="2000" name="Nature">
        <title>Sequence and analysis of chromosome 3 of the plant Arabidopsis thaliana.</title>
        <authorList>
            <person name="Salanoubat M."/>
            <person name="Lemcke K."/>
            <person name="Rieger M."/>
            <person name="Ansorge W."/>
            <person name="Unseld M."/>
            <person name="Fartmann B."/>
            <person name="Valle G."/>
            <person name="Bloecker H."/>
            <person name="Perez-Alonso M."/>
            <person name="Obermaier B."/>
            <person name="Delseny M."/>
            <person name="Boutry M."/>
            <person name="Grivell L.A."/>
            <person name="Mache R."/>
            <person name="Puigdomenech P."/>
            <person name="De Simone V."/>
            <person name="Choisne N."/>
            <person name="Artiguenave F."/>
            <person name="Robert C."/>
            <person name="Brottier P."/>
            <person name="Wincker P."/>
            <person name="Cattolico L."/>
            <person name="Weissenbach J."/>
            <person name="Saurin W."/>
            <person name="Quetier F."/>
            <person name="Schaefer M."/>
            <person name="Mueller-Auer S."/>
            <person name="Gabel C."/>
            <person name="Fuchs M."/>
            <person name="Benes V."/>
            <person name="Wurmbach E."/>
            <person name="Drzonek H."/>
            <person name="Erfle H."/>
            <person name="Jordan N."/>
            <person name="Bangert S."/>
            <person name="Wiedelmann R."/>
            <person name="Kranz H."/>
            <person name="Voss H."/>
            <person name="Holland R."/>
            <person name="Brandt P."/>
            <person name="Nyakatura G."/>
            <person name="Vezzi A."/>
            <person name="D'Angelo M."/>
            <person name="Pallavicini A."/>
            <person name="Toppo S."/>
            <person name="Simionati B."/>
            <person name="Conrad A."/>
            <person name="Hornischer K."/>
            <person name="Kauer G."/>
            <person name="Loehnert T.-H."/>
            <person name="Nordsiek G."/>
            <person name="Reichelt J."/>
            <person name="Scharfe M."/>
            <person name="Schoen O."/>
            <person name="Bargues M."/>
            <person name="Terol J."/>
            <person name="Climent J."/>
            <person name="Navarro P."/>
            <person name="Collado C."/>
            <person name="Perez-Perez A."/>
            <person name="Ottenwaelder B."/>
            <person name="Duchemin D."/>
            <person name="Cooke R."/>
            <person name="Laudie M."/>
            <person name="Berger-Llauro C."/>
            <person name="Purnelle B."/>
            <person name="Masuy D."/>
            <person name="de Haan M."/>
            <person name="Maarse A.C."/>
            <person name="Alcaraz J.-P."/>
            <person name="Cottet A."/>
            <person name="Casacuberta E."/>
            <person name="Monfort A."/>
            <person name="Argiriou A."/>
            <person name="Flores M."/>
            <person name="Liguori R."/>
            <person name="Vitale D."/>
            <person name="Mannhaupt G."/>
            <person name="Haase D."/>
            <person name="Schoof H."/>
            <person name="Rudd S."/>
            <person name="Zaccaria P."/>
            <person name="Mewes H.-W."/>
            <person name="Mayer K.F.X."/>
            <person name="Kaul S."/>
            <person name="Town C.D."/>
            <person name="Koo H.L."/>
            <person name="Tallon L.J."/>
            <person name="Jenkins J."/>
            <person name="Rooney T."/>
            <person name="Rizzo M."/>
            <person name="Walts A."/>
            <person name="Utterback T."/>
            <person name="Fujii C.Y."/>
            <person name="Shea T.P."/>
            <person name="Creasy T.H."/>
            <person name="Haas B."/>
            <person name="Maiti R."/>
            <person name="Wu D."/>
            <person name="Peterson J."/>
            <person name="Van Aken S."/>
            <person name="Pai G."/>
            <person name="Militscher J."/>
            <person name="Sellers P."/>
            <person name="Gill J.E."/>
            <person name="Feldblyum T.V."/>
            <person name="Preuss D."/>
            <person name="Lin X."/>
            <person name="Nierman W.C."/>
            <person name="Salzberg S.L."/>
            <person name="White O."/>
            <person name="Venter J.C."/>
            <person name="Fraser C.M."/>
            <person name="Kaneko T."/>
            <person name="Nakamura Y."/>
            <person name="Sato S."/>
            <person name="Kato T."/>
            <person name="Asamizu E."/>
            <person name="Sasamoto S."/>
            <person name="Kimura T."/>
            <person name="Idesawa K."/>
            <person name="Kawashima K."/>
            <person name="Kishida Y."/>
            <person name="Kiyokawa C."/>
            <person name="Kohara M."/>
            <person name="Matsumoto M."/>
            <person name="Matsuno A."/>
            <person name="Muraki A."/>
            <person name="Nakayama S."/>
            <person name="Nakazaki N."/>
            <person name="Shinpo S."/>
            <person name="Takeuchi C."/>
            <person name="Wada T."/>
            <person name="Watanabe A."/>
            <person name="Yamada M."/>
            <person name="Yasuda M."/>
            <person name="Tabata S."/>
        </authorList>
    </citation>
    <scope>NUCLEOTIDE SEQUENCE [LARGE SCALE GENOMIC DNA]</scope>
    <source>
        <strain>cv. Columbia</strain>
    </source>
</reference>
<reference key="2">
    <citation type="journal article" date="2017" name="Plant J.">
        <title>Araport11: a complete reannotation of the Arabidopsis thaliana reference genome.</title>
        <authorList>
            <person name="Cheng C.Y."/>
            <person name="Krishnakumar V."/>
            <person name="Chan A.P."/>
            <person name="Thibaud-Nissen F."/>
            <person name="Schobel S."/>
            <person name="Town C.D."/>
        </authorList>
    </citation>
    <scope>GENOME REANNOTATION</scope>
    <source>
        <strain>cv. Columbia</strain>
    </source>
</reference>
<reference key="3">
    <citation type="journal article" date="2012" name="Plant Cell Rep.">
        <title>Arabidopsis MKKK20 is involved in osmotic stress response via regulation of MPK6 activity.</title>
        <authorList>
            <person name="Kim J.-M."/>
            <person name="Woo D.-H."/>
            <person name="Kim S.-H."/>
            <person name="Lee S.-Y."/>
            <person name="Park H.-Y."/>
            <person name="Seok H.-Y."/>
            <person name="Chung W.S."/>
            <person name="Moon Y.-H."/>
        </authorList>
    </citation>
    <scope>FUNCTION</scope>
    <scope>DISRUPTION PHENOTYPE</scope>
    <scope>INDUCTION BY SALT; MANNITOL; METHYL VIOLOGEN; SORBITOL AND COLD</scope>
    <scope>DEVELOPMENTAL STAGE</scope>
    <source>
        <strain>cv. Columbia</strain>
    </source>
</reference>
<reference key="4">
    <citation type="journal article" date="2014" name="Front. Plant Sci.">
        <title>Tolerance to drought and salt stress in plants: Unraveling the signaling networks.</title>
        <authorList>
            <person name="Golldack D."/>
            <person name="Li C."/>
            <person name="Mohan H."/>
            <person name="Probst N."/>
        </authorList>
    </citation>
    <scope>REVIEW ON SIGNALING</scope>
</reference>
<reference key="5">
    <citation type="journal article" date="2017" name="Front. Plant Sci.">
        <title>The Arabidopsis mitogen-activated protein kinase kinase kinase 20 (MKKK20) acts upstream of MKK3 and MPK18 in two separate signaling pathways involved in root microtubule functions.</title>
        <authorList>
            <person name="Benhamman R."/>
            <person name="Bai F."/>
            <person name="Drory S.B."/>
            <person name="Loubert-Hudon A."/>
            <person name="Ellis B."/>
            <person name="Matton D.P."/>
        </authorList>
    </citation>
    <scope>FUNCTION</scope>
    <scope>DISRUPTION PHENOTYPE</scope>
    <scope>CATALYTIC ACTIVITY</scope>
    <scope>TISSUE SPECIFICITY</scope>
    <scope>DEVELOPMENTAL STAGE</scope>
    <scope>SUBCELLULAR LOCATION</scope>
    <scope>INTERACTION WITH MKK3 AND MPK18</scope>
    <scope>AUTOPHOSPHORYLATION</scope>
    <scope>IDENTIFICATION BY MASS SPECTROMETRY</scope>
    <scope>PHOSPHORYLATION AT SER-18; THR-19; TYR-41; TYR-66; SER-93 AND SER-114</scope>
    <scope>ACTIVITY REGULATION</scope>
    <source>
        <strain>cv. Columbia</strain>
    </source>
</reference>
<reference key="6">
    <citation type="journal article" date="2017" name="Plant Physiol.">
        <title>AIK1, a mitogen-activated protein kinase, modulates abscisic acid responses through the MKK5-MPK6 kinase cascade.</title>
        <authorList>
            <person name="Li K."/>
            <person name="Yang F."/>
            <person name="Zhang G."/>
            <person name="Song S."/>
            <person name="Li Y."/>
            <person name="Ren D."/>
            <person name="Miao Y."/>
            <person name="Song C.-P."/>
        </authorList>
    </citation>
    <scope>FUNCTION</scope>
    <scope>MUTAGENESIS OF LYS-36</scope>
    <scope>DISRUPTION PHENOTYPE</scope>
    <scope>CATALYTIC ACTIVITY</scope>
    <scope>TISSUE SPECIFICITY</scope>
    <scope>DEVELOPMENTAL STAGE</scope>
    <scope>INDUCTION BY ABSCISIC ACID</scope>
    <scope>ACTIVITY REGULATION</scope>
    <scope>INTERACTION WITH MKK5</scope>
    <scope>SUBCELLULAR LOCATION</scope>
    <source>
        <strain>cv. Columbia</strain>
    </source>
</reference>
<reference key="7">
    <citation type="journal article" date="2018" name="Front. Plant Sci.">
        <title>Mitogen-activated protein kinase cascades in plant hormone signaling.</title>
        <authorList>
            <person name="Jagodzik P."/>
            <person name="Tajdel-Zielinska M."/>
            <person name="Ciesla A."/>
            <person name="Marczak M."/>
            <person name="Ludwikow A."/>
        </authorList>
    </citation>
    <scope>REVIEW ON MITOGEN-ACTIVATED PROTEIN KINASE CASCADES</scope>
</reference>
<reference key="8">
    <citation type="journal article" date="2018" name="Plant Signal. Behav.">
        <title>The Arabidopsis mitogen-activated protein kinase kinase kinase 20 (MKKK20) C-terminal domain interacts with MKK3 and harbors a typical DEF mammalian MAP kinase docking site.</title>
        <authorList>
            <person name="Bai F."/>
            <person name="Matton D.P."/>
        </authorList>
    </citation>
    <scope>INTERACTION WITH MKK3</scope>
    <scope>SUBCELLULAR LOCATION</scope>
</reference>